<comment type="function">
    <text evidence="1">Together with the chaperonin GroEL, plays an essential role in assisting protein folding. The GroEL-GroES system forms a nano-cage that allows encapsulation of the non-native substrate proteins and provides a physical environment optimized to promote and accelerate protein folding. GroES binds to the apical surface of the GroEL ring, thereby capping the opening of the GroEL channel.</text>
</comment>
<comment type="subunit">
    <text evidence="1">Heptamer of 7 subunits arranged in a ring. Interacts with the chaperonin GroEL.</text>
</comment>
<comment type="subcellular location">
    <subcellularLocation>
        <location evidence="1">Cytoplasm</location>
    </subcellularLocation>
</comment>
<comment type="similarity">
    <text evidence="1">Belongs to the GroES chaperonin family.</text>
</comment>
<feature type="chain" id="PRO_1000129701" description="Co-chaperonin GroES">
    <location>
        <begin position="1"/>
        <end position="97"/>
    </location>
</feature>
<protein>
    <recommendedName>
        <fullName evidence="1">Co-chaperonin GroES</fullName>
    </recommendedName>
    <alternativeName>
        <fullName evidence="1">10 kDa chaperonin</fullName>
    </alternativeName>
    <alternativeName>
        <fullName evidence="1">Chaperonin-10</fullName>
        <shortName evidence="1">Cpn10</shortName>
    </alternativeName>
</protein>
<organism>
    <name type="scientific">Salmonella gallinarum (strain 287/91 / NCTC 13346)</name>
    <dbReference type="NCBI Taxonomy" id="550538"/>
    <lineage>
        <taxon>Bacteria</taxon>
        <taxon>Pseudomonadati</taxon>
        <taxon>Pseudomonadota</taxon>
        <taxon>Gammaproteobacteria</taxon>
        <taxon>Enterobacterales</taxon>
        <taxon>Enterobacteriaceae</taxon>
        <taxon>Salmonella</taxon>
    </lineage>
</organism>
<reference key="1">
    <citation type="journal article" date="2008" name="Genome Res.">
        <title>Comparative genome analysis of Salmonella enteritidis PT4 and Salmonella gallinarum 287/91 provides insights into evolutionary and host adaptation pathways.</title>
        <authorList>
            <person name="Thomson N.R."/>
            <person name="Clayton D.J."/>
            <person name="Windhorst D."/>
            <person name="Vernikos G."/>
            <person name="Davidson S."/>
            <person name="Churcher C."/>
            <person name="Quail M.A."/>
            <person name="Stevens M."/>
            <person name="Jones M.A."/>
            <person name="Watson M."/>
            <person name="Barron A."/>
            <person name="Layton A."/>
            <person name="Pickard D."/>
            <person name="Kingsley R.A."/>
            <person name="Bignell A."/>
            <person name="Clark L."/>
            <person name="Harris B."/>
            <person name="Ormond D."/>
            <person name="Abdellah Z."/>
            <person name="Brooks K."/>
            <person name="Cherevach I."/>
            <person name="Chillingworth T."/>
            <person name="Woodward J."/>
            <person name="Norberczak H."/>
            <person name="Lord A."/>
            <person name="Arrowsmith C."/>
            <person name="Jagels K."/>
            <person name="Moule S."/>
            <person name="Mungall K."/>
            <person name="Saunders M."/>
            <person name="Whitehead S."/>
            <person name="Chabalgoity J.A."/>
            <person name="Maskell D."/>
            <person name="Humphreys T."/>
            <person name="Roberts M."/>
            <person name="Barrow P.A."/>
            <person name="Dougan G."/>
            <person name="Parkhill J."/>
        </authorList>
    </citation>
    <scope>NUCLEOTIDE SEQUENCE [LARGE SCALE GENOMIC DNA]</scope>
    <source>
        <strain>287/91 / NCTC 13346</strain>
    </source>
</reference>
<accession>B5R990</accession>
<name>CH10_SALG2</name>
<gene>
    <name evidence="1" type="primary">groES</name>
    <name evidence="1" type="synonym">groS</name>
    <name type="ordered locus">SG4172</name>
</gene>
<evidence type="ECO:0000255" key="1">
    <source>
        <dbReference type="HAMAP-Rule" id="MF_00580"/>
    </source>
</evidence>
<keyword id="KW-0143">Chaperone</keyword>
<keyword id="KW-0963">Cytoplasm</keyword>
<proteinExistence type="inferred from homology"/>
<sequence length="97" mass="10318">MSIRPLHDRVIVKRKEVESKSAGGIVLTGSAAGKSTRGEIIAVGKGRILDNGTVQPLDVKVGDIVIFNDGYGVKSEKIDNEEVLIMSESDILAIVEA</sequence>
<dbReference type="EMBL" id="AM933173">
    <property type="protein sequence ID" value="CAR39938.1"/>
    <property type="molecule type" value="Genomic_DNA"/>
</dbReference>
<dbReference type="RefSeq" id="WP_000027827.1">
    <property type="nucleotide sequence ID" value="NC_011274.1"/>
</dbReference>
<dbReference type="SMR" id="B5R990"/>
<dbReference type="KEGG" id="seg:SG4172"/>
<dbReference type="HOGENOM" id="CLU_132825_1_1_6"/>
<dbReference type="Proteomes" id="UP000008321">
    <property type="component" value="Chromosome"/>
</dbReference>
<dbReference type="GO" id="GO:0005737">
    <property type="term" value="C:cytoplasm"/>
    <property type="evidence" value="ECO:0007669"/>
    <property type="project" value="UniProtKB-SubCell"/>
</dbReference>
<dbReference type="GO" id="GO:0005524">
    <property type="term" value="F:ATP binding"/>
    <property type="evidence" value="ECO:0007669"/>
    <property type="project" value="InterPro"/>
</dbReference>
<dbReference type="GO" id="GO:0046872">
    <property type="term" value="F:metal ion binding"/>
    <property type="evidence" value="ECO:0007669"/>
    <property type="project" value="TreeGrafter"/>
</dbReference>
<dbReference type="GO" id="GO:0044183">
    <property type="term" value="F:protein folding chaperone"/>
    <property type="evidence" value="ECO:0007669"/>
    <property type="project" value="InterPro"/>
</dbReference>
<dbReference type="GO" id="GO:0051087">
    <property type="term" value="F:protein-folding chaperone binding"/>
    <property type="evidence" value="ECO:0007669"/>
    <property type="project" value="TreeGrafter"/>
</dbReference>
<dbReference type="GO" id="GO:0051082">
    <property type="term" value="F:unfolded protein binding"/>
    <property type="evidence" value="ECO:0007669"/>
    <property type="project" value="TreeGrafter"/>
</dbReference>
<dbReference type="GO" id="GO:0051085">
    <property type="term" value="P:chaperone cofactor-dependent protein refolding"/>
    <property type="evidence" value="ECO:0007669"/>
    <property type="project" value="TreeGrafter"/>
</dbReference>
<dbReference type="CDD" id="cd00320">
    <property type="entry name" value="cpn10"/>
    <property type="match status" value="1"/>
</dbReference>
<dbReference type="FunFam" id="2.30.33.40:FF:000001">
    <property type="entry name" value="10 kDa chaperonin"/>
    <property type="match status" value="1"/>
</dbReference>
<dbReference type="Gene3D" id="2.30.33.40">
    <property type="entry name" value="GroES chaperonin"/>
    <property type="match status" value="1"/>
</dbReference>
<dbReference type="HAMAP" id="MF_00580">
    <property type="entry name" value="CH10"/>
    <property type="match status" value="1"/>
</dbReference>
<dbReference type="InterPro" id="IPR020818">
    <property type="entry name" value="Chaperonin_GroES"/>
</dbReference>
<dbReference type="InterPro" id="IPR037124">
    <property type="entry name" value="Chaperonin_GroES_sf"/>
</dbReference>
<dbReference type="InterPro" id="IPR018369">
    <property type="entry name" value="Chaprnonin_Cpn10_CS"/>
</dbReference>
<dbReference type="InterPro" id="IPR011032">
    <property type="entry name" value="GroES-like_sf"/>
</dbReference>
<dbReference type="NCBIfam" id="NF001526">
    <property type="entry name" value="PRK00364.1-1"/>
    <property type="match status" value="1"/>
</dbReference>
<dbReference type="NCBIfam" id="NF001527">
    <property type="entry name" value="PRK00364.1-2"/>
    <property type="match status" value="1"/>
</dbReference>
<dbReference type="NCBIfam" id="NF001531">
    <property type="entry name" value="PRK00364.2-2"/>
    <property type="match status" value="1"/>
</dbReference>
<dbReference type="PANTHER" id="PTHR10772">
    <property type="entry name" value="10 KDA HEAT SHOCK PROTEIN"/>
    <property type="match status" value="1"/>
</dbReference>
<dbReference type="PANTHER" id="PTHR10772:SF58">
    <property type="entry name" value="CO-CHAPERONIN GROES"/>
    <property type="match status" value="1"/>
</dbReference>
<dbReference type="Pfam" id="PF00166">
    <property type="entry name" value="Cpn10"/>
    <property type="match status" value="1"/>
</dbReference>
<dbReference type="PRINTS" id="PR00297">
    <property type="entry name" value="CHAPERONIN10"/>
</dbReference>
<dbReference type="SMART" id="SM00883">
    <property type="entry name" value="Cpn10"/>
    <property type="match status" value="1"/>
</dbReference>
<dbReference type="SUPFAM" id="SSF50129">
    <property type="entry name" value="GroES-like"/>
    <property type="match status" value="1"/>
</dbReference>
<dbReference type="PROSITE" id="PS00681">
    <property type="entry name" value="CHAPERONINS_CPN10"/>
    <property type="match status" value="1"/>
</dbReference>